<dbReference type="EC" id="1.2.1.70" evidence="1"/>
<dbReference type="EMBL" id="CP000538">
    <property type="protein sequence ID" value="EAQ73434.1"/>
    <property type="molecule type" value="Genomic_DNA"/>
</dbReference>
<dbReference type="RefSeq" id="WP_002859933.1">
    <property type="nucleotide sequence ID" value="NC_008787.1"/>
</dbReference>
<dbReference type="SMR" id="A1VYQ1"/>
<dbReference type="KEGG" id="cjj:CJJ81176_0567"/>
<dbReference type="eggNOG" id="COG0373">
    <property type="taxonomic scope" value="Bacteria"/>
</dbReference>
<dbReference type="HOGENOM" id="CLU_035113_2_2_7"/>
<dbReference type="UniPathway" id="UPA00251">
    <property type="reaction ID" value="UER00316"/>
</dbReference>
<dbReference type="Proteomes" id="UP000000646">
    <property type="component" value="Chromosome"/>
</dbReference>
<dbReference type="GO" id="GO:0008883">
    <property type="term" value="F:glutamyl-tRNA reductase activity"/>
    <property type="evidence" value="ECO:0007669"/>
    <property type="project" value="UniProtKB-UniRule"/>
</dbReference>
<dbReference type="GO" id="GO:0050661">
    <property type="term" value="F:NADP binding"/>
    <property type="evidence" value="ECO:0007669"/>
    <property type="project" value="InterPro"/>
</dbReference>
<dbReference type="GO" id="GO:0019353">
    <property type="term" value="P:protoporphyrinogen IX biosynthetic process from glutamate"/>
    <property type="evidence" value="ECO:0007669"/>
    <property type="project" value="TreeGrafter"/>
</dbReference>
<dbReference type="CDD" id="cd05213">
    <property type="entry name" value="NAD_bind_Glutamyl_tRNA_reduct"/>
    <property type="match status" value="1"/>
</dbReference>
<dbReference type="FunFam" id="3.30.460.30:FF:000001">
    <property type="entry name" value="Glutamyl-tRNA reductase"/>
    <property type="match status" value="1"/>
</dbReference>
<dbReference type="Gene3D" id="3.30.460.30">
    <property type="entry name" value="Glutamyl-tRNA reductase, N-terminal domain"/>
    <property type="match status" value="1"/>
</dbReference>
<dbReference type="Gene3D" id="3.40.50.720">
    <property type="entry name" value="NAD(P)-binding Rossmann-like Domain"/>
    <property type="match status" value="1"/>
</dbReference>
<dbReference type="HAMAP" id="MF_00087">
    <property type="entry name" value="Glu_tRNA_reductase"/>
    <property type="match status" value="1"/>
</dbReference>
<dbReference type="InterPro" id="IPR000343">
    <property type="entry name" value="4pyrrol_synth_GluRdtase"/>
</dbReference>
<dbReference type="InterPro" id="IPR015896">
    <property type="entry name" value="4pyrrol_synth_GluRdtase_dimer"/>
</dbReference>
<dbReference type="InterPro" id="IPR015895">
    <property type="entry name" value="4pyrrol_synth_GluRdtase_N"/>
</dbReference>
<dbReference type="InterPro" id="IPR018214">
    <property type="entry name" value="GluRdtase_CS"/>
</dbReference>
<dbReference type="InterPro" id="IPR036453">
    <property type="entry name" value="GluRdtase_dimer_dom_sf"/>
</dbReference>
<dbReference type="InterPro" id="IPR036343">
    <property type="entry name" value="GluRdtase_N_sf"/>
</dbReference>
<dbReference type="InterPro" id="IPR036291">
    <property type="entry name" value="NAD(P)-bd_dom_sf"/>
</dbReference>
<dbReference type="InterPro" id="IPR006151">
    <property type="entry name" value="Shikm_DH/Glu-tRNA_Rdtase"/>
</dbReference>
<dbReference type="NCBIfam" id="TIGR01035">
    <property type="entry name" value="hemA"/>
    <property type="match status" value="1"/>
</dbReference>
<dbReference type="PANTHER" id="PTHR43013">
    <property type="entry name" value="GLUTAMYL-TRNA REDUCTASE"/>
    <property type="match status" value="1"/>
</dbReference>
<dbReference type="PANTHER" id="PTHR43013:SF1">
    <property type="entry name" value="GLUTAMYL-TRNA REDUCTASE"/>
    <property type="match status" value="1"/>
</dbReference>
<dbReference type="Pfam" id="PF00745">
    <property type="entry name" value="GlutR_dimer"/>
    <property type="match status" value="1"/>
</dbReference>
<dbReference type="Pfam" id="PF05201">
    <property type="entry name" value="GlutR_N"/>
    <property type="match status" value="1"/>
</dbReference>
<dbReference type="Pfam" id="PF01488">
    <property type="entry name" value="Shikimate_DH"/>
    <property type="match status" value="1"/>
</dbReference>
<dbReference type="PIRSF" id="PIRSF000445">
    <property type="entry name" value="4pyrrol_synth_GluRdtase"/>
    <property type="match status" value="1"/>
</dbReference>
<dbReference type="SUPFAM" id="SSF69742">
    <property type="entry name" value="Glutamyl tRNA-reductase catalytic, N-terminal domain"/>
    <property type="match status" value="1"/>
</dbReference>
<dbReference type="SUPFAM" id="SSF69075">
    <property type="entry name" value="Glutamyl tRNA-reductase dimerization domain"/>
    <property type="match status" value="1"/>
</dbReference>
<dbReference type="SUPFAM" id="SSF51735">
    <property type="entry name" value="NAD(P)-binding Rossmann-fold domains"/>
    <property type="match status" value="1"/>
</dbReference>
<dbReference type="PROSITE" id="PS00747">
    <property type="entry name" value="GLUTR"/>
    <property type="match status" value="1"/>
</dbReference>
<name>HEM1_CAMJJ</name>
<proteinExistence type="inferred from homology"/>
<organism>
    <name type="scientific">Campylobacter jejuni subsp. jejuni serotype O:23/36 (strain 81-176)</name>
    <dbReference type="NCBI Taxonomy" id="354242"/>
    <lineage>
        <taxon>Bacteria</taxon>
        <taxon>Pseudomonadati</taxon>
        <taxon>Campylobacterota</taxon>
        <taxon>Epsilonproteobacteria</taxon>
        <taxon>Campylobacterales</taxon>
        <taxon>Campylobacteraceae</taxon>
        <taxon>Campylobacter</taxon>
    </lineage>
</organism>
<gene>
    <name evidence="1" type="primary">hemA</name>
    <name type="ordered locus">CJJ81176_0567</name>
</gene>
<accession>A1VYQ1</accession>
<sequence length="432" mass="48713">MYYCISFTHKNTDIALREKLSFSNEAKKSEFLKIISTHENIEECLVISTCNRVEIVAFVKMACAEFIVKSLALLCDVDKDILLEKADIFEDSGAIHHLFSVASSLDSLVVGETQIAGQLKDAFAFAVKNNFCGVHLSRAVHSAFKCAAKVRNETQISKNSISVASVAVAKAKELADLTQKKAVVIGAGEMGELAAKHLIAAGAKVIILNRDLQKAKDLCERLGVLSEYDSLENLKKYLNQYEFFFSATNAPNAIITNSLVEELSYKRYFFDIAVPRDIDINENENISVFAVDDLEIVVQKNLALREQEARMAYGIIGRETSEFFRYLNDLALMPIIKAIRLQAKEYADKQLEIALKKGYLKKSDKEEARKLIHQVFKAFLHTPTVNLKHLQGKMQSDTVINAMRYVFDLQNNLEGLNQYKCEFDMENNDEIY</sequence>
<evidence type="ECO:0000255" key="1">
    <source>
        <dbReference type="HAMAP-Rule" id="MF_00087"/>
    </source>
</evidence>
<keyword id="KW-0521">NADP</keyword>
<keyword id="KW-0560">Oxidoreductase</keyword>
<keyword id="KW-0627">Porphyrin biosynthesis</keyword>
<protein>
    <recommendedName>
        <fullName evidence="1">Glutamyl-tRNA reductase</fullName>
        <shortName evidence="1">GluTR</shortName>
        <ecNumber evidence="1">1.2.1.70</ecNumber>
    </recommendedName>
</protein>
<feature type="chain" id="PRO_1000004605" description="Glutamyl-tRNA reductase">
    <location>
        <begin position="1"/>
        <end position="432"/>
    </location>
</feature>
<feature type="active site" description="Nucleophile" evidence="1">
    <location>
        <position position="50"/>
    </location>
</feature>
<feature type="binding site" evidence="1">
    <location>
        <begin position="49"/>
        <end position="52"/>
    </location>
    <ligand>
        <name>substrate</name>
    </ligand>
</feature>
<feature type="binding site" evidence="1">
    <location>
        <position position="107"/>
    </location>
    <ligand>
        <name>substrate</name>
    </ligand>
</feature>
<feature type="binding site" evidence="1">
    <location>
        <begin position="112"/>
        <end position="114"/>
    </location>
    <ligand>
        <name>substrate</name>
    </ligand>
</feature>
<feature type="binding site" evidence="1">
    <location>
        <position position="118"/>
    </location>
    <ligand>
        <name>substrate</name>
    </ligand>
</feature>
<feature type="binding site" evidence="1">
    <location>
        <begin position="186"/>
        <end position="191"/>
    </location>
    <ligand>
        <name>NADP(+)</name>
        <dbReference type="ChEBI" id="CHEBI:58349"/>
    </ligand>
</feature>
<feature type="site" description="Important for activity" evidence="1">
    <location>
        <position position="97"/>
    </location>
</feature>
<reference key="1">
    <citation type="submission" date="2006-12" db="EMBL/GenBank/DDBJ databases">
        <authorList>
            <person name="Fouts D.E."/>
            <person name="Nelson K.E."/>
            <person name="Sebastian Y."/>
        </authorList>
    </citation>
    <scope>NUCLEOTIDE SEQUENCE [LARGE SCALE GENOMIC DNA]</scope>
    <source>
        <strain>81-176</strain>
    </source>
</reference>
<comment type="function">
    <text evidence="1">Catalyzes the NADPH-dependent reduction of glutamyl-tRNA(Glu) to glutamate 1-semialdehyde (GSA).</text>
</comment>
<comment type="catalytic activity">
    <reaction evidence="1">
        <text>(S)-4-amino-5-oxopentanoate + tRNA(Glu) + NADP(+) = L-glutamyl-tRNA(Glu) + NADPH + H(+)</text>
        <dbReference type="Rhea" id="RHEA:12344"/>
        <dbReference type="Rhea" id="RHEA-COMP:9663"/>
        <dbReference type="Rhea" id="RHEA-COMP:9680"/>
        <dbReference type="ChEBI" id="CHEBI:15378"/>
        <dbReference type="ChEBI" id="CHEBI:57501"/>
        <dbReference type="ChEBI" id="CHEBI:57783"/>
        <dbReference type="ChEBI" id="CHEBI:58349"/>
        <dbReference type="ChEBI" id="CHEBI:78442"/>
        <dbReference type="ChEBI" id="CHEBI:78520"/>
        <dbReference type="EC" id="1.2.1.70"/>
    </reaction>
</comment>
<comment type="pathway">
    <text evidence="1">Porphyrin-containing compound metabolism; protoporphyrin-IX biosynthesis; 5-aminolevulinate from L-glutamyl-tRNA(Glu): step 1/2.</text>
</comment>
<comment type="subunit">
    <text evidence="1">Homodimer.</text>
</comment>
<comment type="domain">
    <text evidence="1">Possesses an unusual extended V-shaped dimeric structure with each monomer consisting of three distinct domains arranged along a curved 'spinal' alpha-helix. The N-terminal catalytic domain specifically recognizes the glutamate moiety of the substrate. The second domain is the NADPH-binding domain, and the third C-terminal domain is responsible for dimerization.</text>
</comment>
<comment type="miscellaneous">
    <text evidence="1">During catalysis, the active site Cys acts as a nucleophile attacking the alpha-carbonyl group of tRNA-bound glutamate with the formation of a thioester intermediate between enzyme and glutamate, and the concomitant release of tRNA(Glu). The thioester intermediate is finally reduced by direct hydride transfer from NADPH, to form the product GSA.</text>
</comment>
<comment type="similarity">
    <text evidence="1">Belongs to the glutamyl-tRNA reductase family.</text>
</comment>